<sequence length="153" mass="17814">MADQQNIRAFQKQLGINLNRKNVSRKKGLRMHHSIGLGFKTPKEAITGTYIDKKCPFTGHISIRGRILTGVVRKMKMHRTIVIRRDYLHFIRKYDRFEKRHRNMSVHLSPCFRDVEAGDIVTVGECRPLSKTVRFNVLKVSKMAGSKKKFSKF</sequence>
<gene>
    <name type="primary">RpS11</name>
    <name type="ORF">AGAP009998</name>
</gene>
<name>RS11_ANOGA</name>
<feature type="chain" id="PRO_0000128514" description="Small ribosomal subunit protein uS17">
    <location>
        <begin position="1"/>
        <end position="153"/>
    </location>
</feature>
<feature type="sequence conflict" description="In Ref. 1; CAA93817." evidence="1" ref="1">
    <original>MKMHRTIV</original>
    <variation>CIVLLY</variation>
    <location>
        <begin position="75"/>
        <end position="82"/>
    </location>
</feature>
<feature type="sequence conflict" description="In Ref. 1; CAA93817." evidence="1" ref="1">
    <original>H</original>
    <variation>Q</variation>
    <location>
        <position position="89"/>
    </location>
</feature>
<feature type="sequence conflict" description="In Ref. 1; CAA93817." evidence="1" ref="1">
    <original>R</original>
    <variation>T</variation>
    <location>
        <position position="96"/>
    </location>
</feature>
<feature type="sequence conflict" description="In Ref. 1; CAA93817." evidence="1" ref="1">
    <original>H</original>
    <variation>N</variation>
    <location>
        <position position="101"/>
    </location>
</feature>
<feature type="sequence conflict" description="In Ref. 1; CAA93817." evidence="1" ref="1">
    <original>SV</original>
    <variation>RL</variation>
    <location>
        <begin position="105"/>
        <end position="106"/>
    </location>
</feature>
<feature type="sequence conflict" description="In Ref. 1; CAA93817." evidence="1" ref="1">
    <original>V</original>
    <variation>L</variation>
    <location>
        <position position="123"/>
    </location>
</feature>
<feature type="sequence conflict" description="In Ref. 1; CAA93817." evidence="1" ref="1">
    <original>V</original>
    <variation>E</variation>
    <location>
        <position position="140"/>
    </location>
</feature>
<comment type="similarity">
    <text evidence="1">Belongs to the universal ribosomal protein uS17 family.</text>
</comment>
<keyword id="KW-1185">Reference proteome</keyword>
<keyword id="KW-0687">Ribonucleoprotein</keyword>
<keyword id="KW-0689">Ribosomal protein</keyword>
<keyword id="KW-0694">RNA-binding</keyword>
<keyword id="KW-0699">rRNA-binding</keyword>
<reference key="1">
    <citation type="submission" date="1996-03" db="EMBL/GenBank/DDBJ databases">
        <title>Isolation of cDNAs that are specifically expressed in different tissues of the malaria mosquito Anopheles gambiae.</title>
        <authorList>
            <person name="Dimopoulos G.M."/>
            <person name="Richman A."/>
            <person name="della Torre A."/>
            <person name="Rubio J."/>
            <person name="Kafatos F.C."/>
            <person name="Louis C."/>
        </authorList>
    </citation>
    <scope>NUCLEOTIDE SEQUENCE [MRNA]</scope>
    <source>
        <strain>G3</strain>
        <tissue>Midgut</tissue>
    </source>
</reference>
<reference key="2">
    <citation type="journal article" date="2002" name="Science">
        <title>The genome sequence of the malaria mosquito Anopheles gambiae.</title>
        <authorList>
            <person name="Holt R.A."/>
            <person name="Subramanian G.M."/>
            <person name="Halpern A."/>
            <person name="Sutton G.G."/>
            <person name="Charlab R."/>
            <person name="Nusskern D.R."/>
            <person name="Wincker P."/>
            <person name="Clark A.G."/>
            <person name="Ribeiro J.M.C."/>
            <person name="Wides R."/>
            <person name="Salzberg S.L."/>
            <person name="Loftus B.J."/>
            <person name="Yandell M.D."/>
            <person name="Majoros W.H."/>
            <person name="Rusch D.B."/>
            <person name="Lai Z."/>
            <person name="Kraft C.L."/>
            <person name="Abril J.F."/>
            <person name="Anthouard V."/>
            <person name="Arensburger P."/>
            <person name="Atkinson P.W."/>
            <person name="Baden H."/>
            <person name="de Berardinis V."/>
            <person name="Baldwin D."/>
            <person name="Benes V."/>
            <person name="Biedler J."/>
            <person name="Blass C."/>
            <person name="Bolanos R."/>
            <person name="Boscus D."/>
            <person name="Barnstead M."/>
            <person name="Cai S."/>
            <person name="Center A."/>
            <person name="Chaturverdi K."/>
            <person name="Christophides G.K."/>
            <person name="Chrystal M.A.M."/>
            <person name="Clamp M."/>
            <person name="Cravchik A."/>
            <person name="Curwen V."/>
            <person name="Dana A."/>
            <person name="Delcher A."/>
            <person name="Dew I."/>
            <person name="Evans C.A."/>
            <person name="Flanigan M."/>
            <person name="Grundschober-Freimoser A."/>
            <person name="Friedli L."/>
            <person name="Gu Z."/>
            <person name="Guan P."/>
            <person name="Guigo R."/>
            <person name="Hillenmeyer M.E."/>
            <person name="Hladun S.L."/>
            <person name="Hogan J.R."/>
            <person name="Hong Y.S."/>
            <person name="Hoover J."/>
            <person name="Jaillon O."/>
            <person name="Ke Z."/>
            <person name="Kodira C.D."/>
            <person name="Kokoza E."/>
            <person name="Koutsos A."/>
            <person name="Letunic I."/>
            <person name="Levitsky A.A."/>
            <person name="Liang Y."/>
            <person name="Lin J.-J."/>
            <person name="Lobo N.F."/>
            <person name="Lopez J.R."/>
            <person name="Malek J.A."/>
            <person name="McIntosh T.C."/>
            <person name="Meister S."/>
            <person name="Miller J.R."/>
            <person name="Mobarry C."/>
            <person name="Mongin E."/>
            <person name="Murphy S.D."/>
            <person name="O'Brochta D.A."/>
            <person name="Pfannkoch C."/>
            <person name="Qi R."/>
            <person name="Regier M.A."/>
            <person name="Remington K."/>
            <person name="Shao H."/>
            <person name="Sharakhova M.V."/>
            <person name="Sitter C.D."/>
            <person name="Shetty J."/>
            <person name="Smith T.J."/>
            <person name="Strong R."/>
            <person name="Sun J."/>
            <person name="Thomasova D."/>
            <person name="Ton L.Q."/>
            <person name="Topalis P."/>
            <person name="Tu Z.J."/>
            <person name="Unger M.F."/>
            <person name="Walenz B."/>
            <person name="Wang A.H."/>
            <person name="Wang J."/>
            <person name="Wang M."/>
            <person name="Wang X."/>
            <person name="Woodford K.J."/>
            <person name="Wortman J.R."/>
            <person name="Wu M."/>
            <person name="Yao A."/>
            <person name="Zdobnov E.M."/>
            <person name="Zhang H."/>
            <person name="Zhao Q."/>
            <person name="Zhao S."/>
            <person name="Zhu S.C."/>
            <person name="Zhimulev I."/>
            <person name="Coluzzi M."/>
            <person name="della Torre A."/>
            <person name="Roth C.W."/>
            <person name="Louis C."/>
            <person name="Kalush F."/>
            <person name="Mural R.J."/>
            <person name="Myers E.W."/>
            <person name="Adams M.D."/>
            <person name="Smith H.O."/>
            <person name="Broder S."/>
            <person name="Gardner M.J."/>
            <person name="Fraser C.M."/>
            <person name="Birney E."/>
            <person name="Bork P."/>
            <person name="Brey P.T."/>
            <person name="Venter J.C."/>
            <person name="Weissenbach J."/>
            <person name="Kafatos F.C."/>
            <person name="Collins F.H."/>
            <person name="Hoffman S.L."/>
        </authorList>
    </citation>
    <scope>NUCLEOTIDE SEQUENCE [LARGE SCALE GENOMIC DNA]</scope>
    <source>
        <strain>PEST</strain>
    </source>
</reference>
<protein>
    <recommendedName>
        <fullName evidence="1">Small ribosomal subunit protein uS17</fullName>
    </recommendedName>
    <alternativeName>
        <fullName>40S ribosomal protein S11</fullName>
    </alternativeName>
</protein>
<dbReference type="EMBL" id="Z69977">
    <property type="protein sequence ID" value="CAA93817.1"/>
    <property type="molecule type" value="mRNA"/>
</dbReference>
<dbReference type="EMBL" id="AAAB01008980">
    <property type="protein sequence ID" value="EAA13929.3"/>
    <property type="molecule type" value="Genomic_DNA"/>
</dbReference>
<dbReference type="SMR" id="P52812"/>
<dbReference type="FunCoup" id="P52812">
    <property type="interactions" value="1667"/>
</dbReference>
<dbReference type="STRING" id="7165.P52812"/>
<dbReference type="PaxDb" id="7165-AGAP009998-PA"/>
<dbReference type="EnsemblMetazoa" id="AGAP009998-RA">
    <property type="protein sequence ID" value="AGAP009998-PA"/>
    <property type="gene ID" value="AGAP009998"/>
</dbReference>
<dbReference type="GeneID" id="1279424"/>
<dbReference type="KEGG" id="aga:1279424"/>
<dbReference type="CTD" id="6205"/>
<dbReference type="VEuPathDB" id="VectorBase:AGAMI1_005551"/>
<dbReference type="VEuPathDB" id="VectorBase:AGAP009998"/>
<dbReference type="eggNOG" id="KOG1728">
    <property type="taxonomic scope" value="Eukaryota"/>
</dbReference>
<dbReference type="HOGENOM" id="CLU_073626_0_2_1"/>
<dbReference type="InParanoid" id="P52812"/>
<dbReference type="OMA" id="KDVGMGF"/>
<dbReference type="PhylomeDB" id="P52812"/>
<dbReference type="Proteomes" id="UP000007062">
    <property type="component" value="Chromosome 3R"/>
</dbReference>
<dbReference type="GO" id="GO:0022627">
    <property type="term" value="C:cytosolic small ribosomal subunit"/>
    <property type="evidence" value="ECO:0000318"/>
    <property type="project" value="GO_Central"/>
</dbReference>
<dbReference type="GO" id="GO:0019843">
    <property type="term" value="F:rRNA binding"/>
    <property type="evidence" value="ECO:0007669"/>
    <property type="project" value="UniProtKB-KW"/>
</dbReference>
<dbReference type="GO" id="GO:0003735">
    <property type="term" value="F:structural constituent of ribosome"/>
    <property type="evidence" value="ECO:0000318"/>
    <property type="project" value="GO_Central"/>
</dbReference>
<dbReference type="GO" id="GO:0006412">
    <property type="term" value="P:translation"/>
    <property type="evidence" value="ECO:0007669"/>
    <property type="project" value="InterPro"/>
</dbReference>
<dbReference type="CDD" id="cd00364">
    <property type="entry name" value="Ribosomal_uS17"/>
    <property type="match status" value="1"/>
</dbReference>
<dbReference type="FunFam" id="2.40.50.1000:FF:000002">
    <property type="entry name" value="40S ribosomal protein S11"/>
    <property type="match status" value="1"/>
</dbReference>
<dbReference type="Gene3D" id="2.40.50.1000">
    <property type="match status" value="1"/>
</dbReference>
<dbReference type="InterPro" id="IPR012340">
    <property type="entry name" value="NA-bd_OB-fold"/>
</dbReference>
<dbReference type="InterPro" id="IPR000266">
    <property type="entry name" value="Ribosomal_uS17"/>
</dbReference>
<dbReference type="InterPro" id="IPR028333">
    <property type="entry name" value="Ribosomal_uS17_arc/euk"/>
</dbReference>
<dbReference type="InterPro" id="IPR019979">
    <property type="entry name" value="Ribosomal_uS17_CS"/>
</dbReference>
<dbReference type="InterPro" id="IPR032440">
    <property type="entry name" value="Ribosomal_uS17_N"/>
</dbReference>
<dbReference type="NCBIfam" id="TIGR03630">
    <property type="entry name" value="uS17_arch"/>
    <property type="match status" value="1"/>
</dbReference>
<dbReference type="PANTHER" id="PTHR10744">
    <property type="entry name" value="40S RIBOSOMAL PROTEIN S11 FAMILY MEMBER"/>
    <property type="match status" value="1"/>
</dbReference>
<dbReference type="PANTHER" id="PTHR10744:SF9">
    <property type="entry name" value="40S RIBOSOMAL PROTEIN S11-RELATED"/>
    <property type="match status" value="1"/>
</dbReference>
<dbReference type="Pfam" id="PF00366">
    <property type="entry name" value="Ribosomal_S17"/>
    <property type="match status" value="1"/>
</dbReference>
<dbReference type="Pfam" id="PF16205">
    <property type="entry name" value="Ribosomal_S17_N"/>
    <property type="match status" value="1"/>
</dbReference>
<dbReference type="PRINTS" id="PR00973">
    <property type="entry name" value="RIBOSOMALS17"/>
</dbReference>
<dbReference type="SUPFAM" id="SSF50249">
    <property type="entry name" value="Nucleic acid-binding proteins"/>
    <property type="match status" value="1"/>
</dbReference>
<dbReference type="PROSITE" id="PS00056">
    <property type="entry name" value="RIBOSOMAL_S17"/>
    <property type="match status" value="1"/>
</dbReference>
<proteinExistence type="evidence at transcript level"/>
<accession>P52812</accession>
<accession>Q7Q131</accession>
<evidence type="ECO:0000305" key="1"/>
<organism>
    <name type="scientific">Anopheles gambiae</name>
    <name type="common">African malaria mosquito</name>
    <dbReference type="NCBI Taxonomy" id="7165"/>
    <lineage>
        <taxon>Eukaryota</taxon>
        <taxon>Metazoa</taxon>
        <taxon>Ecdysozoa</taxon>
        <taxon>Arthropoda</taxon>
        <taxon>Hexapoda</taxon>
        <taxon>Insecta</taxon>
        <taxon>Pterygota</taxon>
        <taxon>Neoptera</taxon>
        <taxon>Endopterygota</taxon>
        <taxon>Diptera</taxon>
        <taxon>Nematocera</taxon>
        <taxon>Culicoidea</taxon>
        <taxon>Culicidae</taxon>
        <taxon>Anophelinae</taxon>
        <taxon>Anopheles</taxon>
    </lineage>
</organism>